<accession>Q30Q10</accession>
<feature type="chain" id="PRO_1000072042" description="Chaperone protein DnaK">
    <location>
        <begin position="1"/>
        <end position="628"/>
    </location>
</feature>
<feature type="region of interest" description="Disordered" evidence="2">
    <location>
        <begin position="597"/>
        <end position="628"/>
    </location>
</feature>
<feature type="modified residue" description="Phosphothreonine; by autocatalysis" evidence="1">
    <location>
        <position position="197"/>
    </location>
</feature>
<comment type="function">
    <text evidence="1">Acts as a chaperone.</text>
</comment>
<comment type="induction">
    <text evidence="1">By stress conditions e.g. heat shock.</text>
</comment>
<comment type="similarity">
    <text evidence="1">Belongs to the heat shock protein 70 family.</text>
</comment>
<keyword id="KW-0067">ATP-binding</keyword>
<keyword id="KW-0143">Chaperone</keyword>
<keyword id="KW-0547">Nucleotide-binding</keyword>
<keyword id="KW-0597">Phosphoprotein</keyword>
<keyword id="KW-1185">Reference proteome</keyword>
<keyword id="KW-0346">Stress response</keyword>
<reference key="1">
    <citation type="journal article" date="2008" name="Appl. Environ. Microbiol.">
        <title>Genome of the epsilonproteobacterial chemolithoautotroph Sulfurimonas denitrificans.</title>
        <authorList>
            <person name="Sievert S.M."/>
            <person name="Scott K.M."/>
            <person name="Klotz M.G."/>
            <person name="Chain P.S.G."/>
            <person name="Hauser L.J."/>
            <person name="Hemp J."/>
            <person name="Huegler M."/>
            <person name="Land M."/>
            <person name="Lapidus A."/>
            <person name="Larimer F.W."/>
            <person name="Lucas S."/>
            <person name="Malfatti S.A."/>
            <person name="Meyer F."/>
            <person name="Paulsen I.T."/>
            <person name="Ren Q."/>
            <person name="Simon J."/>
            <person name="Bailey K."/>
            <person name="Diaz E."/>
            <person name="Fitzpatrick K.A."/>
            <person name="Glover B."/>
            <person name="Gwatney N."/>
            <person name="Korajkic A."/>
            <person name="Long A."/>
            <person name="Mobberley J.M."/>
            <person name="Pantry S.N."/>
            <person name="Pazder G."/>
            <person name="Peterson S."/>
            <person name="Quintanilla J.D."/>
            <person name="Sprinkle R."/>
            <person name="Stephens J."/>
            <person name="Thomas P."/>
            <person name="Vaughn R."/>
            <person name="Weber M.J."/>
            <person name="Wooten L.L."/>
        </authorList>
    </citation>
    <scope>NUCLEOTIDE SEQUENCE [LARGE SCALE GENOMIC DNA]</scope>
    <source>
        <strain>ATCC 33889 / DSM 1251</strain>
    </source>
</reference>
<proteinExistence type="inferred from homology"/>
<organism>
    <name type="scientific">Sulfurimonas denitrificans (strain ATCC 33889 / DSM 1251)</name>
    <name type="common">Thiomicrospira denitrificans (strain ATCC 33889 / DSM 1251)</name>
    <dbReference type="NCBI Taxonomy" id="326298"/>
    <lineage>
        <taxon>Bacteria</taxon>
        <taxon>Pseudomonadati</taxon>
        <taxon>Campylobacterota</taxon>
        <taxon>Epsilonproteobacteria</taxon>
        <taxon>Campylobacterales</taxon>
        <taxon>Sulfurimonadaceae</taxon>
        <taxon>Sulfurimonas</taxon>
    </lineage>
</organism>
<protein>
    <recommendedName>
        <fullName evidence="1">Chaperone protein DnaK</fullName>
    </recommendedName>
    <alternativeName>
        <fullName evidence="1">HSP70</fullName>
    </alternativeName>
    <alternativeName>
        <fullName evidence="1">Heat shock 70 kDa protein</fullName>
    </alternativeName>
    <alternativeName>
        <fullName evidence="1">Heat shock protein 70</fullName>
    </alternativeName>
</protein>
<name>DNAK_SULDN</name>
<evidence type="ECO:0000255" key="1">
    <source>
        <dbReference type="HAMAP-Rule" id="MF_00332"/>
    </source>
</evidence>
<evidence type="ECO:0000256" key="2">
    <source>
        <dbReference type="SAM" id="MobiDB-lite"/>
    </source>
</evidence>
<dbReference type="EMBL" id="CP000153">
    <property type="protein sequence ID" value="ABB44921.1"/>
    <property type="molecule type" value="Genomic_DNA"/>
</dbReference>
<dbReference type="RefSeq" id="WP_011373262.1">
    <property type="nucleotide sequence ID" value="NC_007575.1"/>
</dbReference>
<dbReference type="SMR" id="Q30Q10"/>
<dbReference type="STRING" id="326298.Suden_1644"/>
<dbReference type="KEGG" id="tdn:Suden_1644"/>
<dbReference type="eggNOG" id="COG0443">
    <property type="taxonomic scope" value="Bacteria"/>
</dbReference>
<dbReference type="HOGENOM" id="CLU_005965_2_4_7"/>
<dbReference type="OrthoDB" id="9766019at2"/>
<dbReference type="Proteomes" id="UP000002714">
    <property type="component" value="Chromosome"/>
</dbReference>
<dbReference type="GO" id="GO:0005524">
    <property type="term" value="F:ATP binding"/>
    <property type="evidence" value="ECO:0007669"/>
    <property type="project" value="UniProtKB-UniRule"/>
</dbReference>
<dbReference type="GO" id="GO:0140662">
    <property type="term" value="F:ATP-dependent protein folding chaperone"/>
    <property type="evidence" value="ECO:0007669"/>
    <property type="project" value="InterPro"/>
</dbReference>
<dbReference type="GO" id="GO:0051082">
    <property type="term" value="F:unfolded protein binding"/>
    <property type="evidence" value="ECO:0007669"/>
    <property type="project" value="InterPro"/>
</dbReference>
<dbReference type="CDD" id="cd10234">
    <property type="entry name" value="ASKHA_NBD_HSP70_DnaK-like"/>
    <property type="match status" value="1"/>
</dbReference>
<dbReference type="FunFam" id="2.60.34.10:FF:000014">
    <property type="entry name" value="Chaperone protein DnaK HSP70"/>
    <property type="match status" value="1"/>
</dbReference>
<dbReference type="FunFam" id="1.20.1270.10:FF:000001">
    <property type="entry name" value="Molecular chaperone DnaK"/>
    <property type="match status" value="1"/>
</dbReference>
<dbReference type="FunFam" id="3.30.420.40:FF:000004">
    <property type="entry name" value="Molecular chaperone DnaK"/>
    <property type="match status" value="1"/>
</dbReference>
<dbReference type="FunFam" id="3.90.640.10:FF:000003">
    <property type="entry name" value="Molecular chaperone DnaK"/>
    <property type="match status" value="1"/>
</dbReference>
<dbReference type="Gene3D" id="1.20.1270.10">
    <property type="match status" value="1"/>
</dbReference>
<dbReference type="Gene3D" id="3.30.420.40">
    <property type="match status" value="2"/>
</dbReference>
<dbReference type="Gene3D" id="3.90.640.10">
    <property type="entry name" value="Actin, Chain A, domain 4"/>
    <property type="match status" value="1"/>
</dbReference>
<dbReference type="Gene3D" id="2.60.34.10">
    <property type="entry name" value="Substrate Binding Domain Of DNAk, Chain A, domain 1"/>
    <property type="match status" value="1"/>
</dbReference>
<dbReference type="HAMAP" id="MF_00332">
    <property type="entry name" value="DnaK"/>
    <property type="match status" value="1"/>
</dbReference>
<dbReference type="InterPro" id="IPR043129">
    <property type="entry name" value="ATPase_NBD"/>
</dbReference>
<dbReference type="InterPro" id="IPR012725">
    <property type="entry name" value="Chaperone_DnaK"/>
</dbReference>
<dbReference type="InterPro" id="IPR018181">
    <property type="entry name" value="Heat_shock_70_CS"/>
</dbReference>
<dbReference type="InterPro" id="IPR029048">
    <property type="entry name" value="HSP70_C_sf"/>
</dbReference>
<dbReference type="InterPro" id="IPR029047">
    <property type="entry name" value="HSP70_peptide-bd_sf"/>
</dbReference>
<dbReference type="InterPro" id="IPR013126">
    <property type="entry name" value="Hsp_70_fam"/>
</dbReference>
<dbReference type="NCBIfam" id="NF001413">
    <property type="entry name" value="PRK00290.1"/>
    <property type="match status" value="1"/>
</dbReference>
<dbReference type="NCBIfam" id="TIGR02350">
    <property type="entry name" value="prok_dnaK"/>
    <property type="match status" value="1"/>
</dbReference>
<dbReference type="PANTHER" id="PTHR19375">
    <property type="entry name" value="HEAT SHOCK PROTEIN 70KDA"/>
    <property type="match status" value="1"/>
</dbReference>
<dbReference type="Pfam" id="PF00012">
    <property type="entry name" value="HSP70"/>
    <property type="match status" value="1"/>
</dbReference>
<dbReference type="PRINTS" id="PR00301">
    <property type="entry name" value="HEATSHOCK70"/>
</dbReference>
<dbReference type="SUPFAM" id="SSF53067">
    <property type="entry name" value="Actin-like ATPase domain"/>
    <property type="match status" value="2"/>
</dbReference>
<dbReference type="SUPFAM" id="SSF100934">
    <property type="entry name" value="Heat shock protein 70kD (HSP70), C-terminal subdomain"/>
    <property type="match status" value="1"/>
</dbReference>
<dbReference type="SUPFAM" id="SSF100920">
    <property type="entry name" value="Heat shock protein 70kD (HSP70), peptide-binding domain"/>
    <property type="match status" value="1"/>
</dbReference>
<dbReference type="PROSITE" id="PS00297">
    <property type="entry name" value="HSP70_1"/>
    <property type="match status" value="1"/>
</dbReference>
<dbReference type="PROSITE" id="PS00329">
    <property type="entry name" value="HSP70_2"/>
    <property type="match status" value="1"/>
</dbReference>
<sequence length="628" mass="67046">MSKVIGIDLGTTNSCVAVYEGGEAKIIPNKEGKNTTPSIVAFTDKGEVLVGDPAKRQAITNPNKTISSIKRIMGLMMSEENAKAAHDKVTYNIVDKDGMAAVDVAGKIYTPQEISAKILSKLKEDAEAYIGSSVTDAVITVPAYFNDAQRKATKDAGTIAGLNVLRIINEPTASALAYGLESKSDENVLVYDLGGGTFDVTVLEISDGTFEVLSTDGNAFLGGDDFDNKIVDYLNAEFKSSHGIDLKNDKMALQRLKDAAENAKKELSSSTETEINLPFITMTEAGPQHLVLKLTRAKFESMIEKLVEETIAHIKTAMKESGLDNDAIKEIIMVGGSTRVPLAQEMVSKFFGGKKLNKGVNPDEVVAAGAAIQGGVLRGDVKDVLLLDVTPLSLGIETLGGVATKIIEKGTTIPVKKSQIFSTAEDNQPAVSISVVQGEREFARDNKSLGLFELGNIAAAPRGVPQIEVTFDIDANGILTVSSTDKGTGKSQSITISGSSGLSEEEINKMVKDAELHKAEDSKRKELVELKNQADALIAQTEKSIGEMGDKIEADEKAKIEAAITELKDVLKDTNATKEKIEPKVKTLTEASHKMAEQMYKGEQGAQGGAADTSKKKSDDDVIDAEIE</sequence>
<gene>
    <name evidence="1" type="primary">dnaK</name>
    <name type="ordered locus">Suden_1644</name>
</gene>